<feature type="chain" id="PRO_1000198825" description="Anthranilate phosphoribosyltransferase">
    <location>
        <begin position="1"/>
        <end position="333"/>
    </location>
</feature>
<feature type="binding site" evidence="1">
    <location>
        <position position="81"/>
    </location>
    <ligand>
        <name>5-phospho-alpha-D-ribose 1-diphosphate</name>
        <dbReference type="ChEBI" id="CHEBI:58017"/>
    </ligand>
</feature>
<feature type="binding site" evidence="1">
    <location>
        <position position="81"/>
    </location>
    <ligand>
        <name>anthranilate</name>
        <dbReference type="ChEBI" id="CHEBI:16567"/>
        <label>1</label>
    </ligand>
</feature>
<feature type="binding site" evidence="1">
    <location>
        <begin position="84"/>
        <end position="85"/>
    </location>
    <ligand>
        <name>5-phospho-alpha-D-ribose 1-diphosphate</name>
        <dbReference type="ChEBI" id="CHEBI:58017"/>
    </ligand>
</feature>
<feature type="binding site" evidence="1">
    <location>
        <position position="89"/>
    </location>
    <ligand>
        <name>5-phospho-alpha-D-ribose 1-diphosphate</name>
        <dbReference type="ChEBI" id="CHEBI:58017"/>
    </ligand>
</feature>
<feature type="binding site" evidence="1">
    <location>
        <begin position="91"/>
        <end position="94"/>
    </location>
    <ligand>
        <name>5-phospho-alpha-D-ribose 1-diphosphate</name>
        <dbReference type="ChEBI" id="CHEBI:58017"/>
    </ligand>
</feature>
<feature type="binding site" evidence="1">
    <location>
        <position position="93"/>
    </location>
    <ligand>
        <name>Mg(2+)</name>
        <dbReference type="ChEBI" id="CHEBI:18420"/>
        <label>1</label>
    </ligand>
</feature>
<feature type="binding site" evidence="1">
    <location>
        <begin position="109"/>
        <end position="117"/>
    </location>
    <ligand>
        <name>5-phospho-alpha-D-ribose 1-diphosphate</name>
        <dbReference type="ChEBI" id="CHEBI:58017"/>
    </ligand>
</feature>
<feature type="binding site" evidence="1">
    <location>
        <position position="112"/>
    </location>
    <ligand>
        <name>anthranilate</name>
        <dbReference type="ChEBI" id="CHEBI:16567"/>
        <label>1</label>
    </ligand>
</feature>
<feature type="binding site" evidence="1">
    <location>
        <position position="121"/>
    </location>
    <ligand>
        <name>5-phospho-alpha-D-ribose 1-diphosphate</name>
        <dbReference type="ChEBI" id="CHEBI:58017"/>
    </ligand>
</feature>
<feature type="binding site" evidence="1">
    <location>
        <position position="167"/>
    </location>
    <ligand>
        <name>anthranilate</name>
        <dbReference type="ChEBI" id="CHEBI:16567"/>
        <label>2</label>
    </ligand>
</feature>
<feature type="binding site" evidence="1">
    <location>
        <position position="225"/>
    </location>
    <ligand>
        <name>Mg(2+)</name>
        <dbReference type="ChEBI" id="CHEBI:18420"/>
        <label>2</label>
    </ligand>
</feature>
<feature type="binding site" evidence="1">
    <location>
        <position position="226"/>
    </location>
    <ligand>
        <name>Mg(2+)</name>
        <dbReference type="ChEBI" id="CHEBI:18420"/>
        <label>1</label>
    </ligand>
</feature>
<feature type="binding site" evidence="1">
    <location>
        <position position="226"/>
    </location>
    <ligand>
        <name>Mg(2+)</name>
        <dbReference type="ChEBI" id="CHEBI:18420"/>
        <label>2</label>
    </ligand>
</feature>
<reference key="1">
    <citation type="journal article" date="2009" name="J. Bacteriol.">
        <title>Complete genome sequence of Haemophilus parasuis SH0165.</title>
        <authorList>
            <person name="Yue M."/>
            <person name="Yang F."/>
            <person name="Yang J."/>
            <person name="Bei W."/>
            <person name="Cai X."/>
            <person name="Chen L."/>
            <person name="Dong J."/>
            <person name="Zhou R."/>
            <person name="Jin M."/>
            <person name="Jin Q."/>
            <person name="Chen H."/>
        </authorList>
    </citation>
    <scope>NUCLEOTIDE SEQUENCE [LARGE SCALE GENOMIC DNA]</scope>
    <source>
        <strain>SH0165</strain>
    </source>
</reference>
<proteinExistence type="inferred from homology"/>
<protein>
    <recommendedName>
        <fullName evidence="1">Anthranilate phosphoribosyltransferase</fullName>
        <ecNumber evidence="1">2.4.2.18</ecNumber>
    </recommendedName>
</protein>
<name>TRPD_GLAP5</name>
<sequence>MQTEQLLLKIIEQTHLTSSEMQQLFTSIIQGELNPIQLTALLITLKIRGESAEEISGAVAACLNAAQPFPTPDYAFADIVGTGGDSANTINISTASAIVGAACGLKIAKHGNRSVSSKTGSSDLLTALGVNINMPADIARRALDEIGLCFLFAQQYHLGFKHAVPVRQALKTRTIFNILGPLINPARPKRQLLGVYSPHLLKPYAETVAQLGHQHTFVVHGCGLDEVAIHGRTDVAEIYDGKITYYSLSPLDFGFQAKPLESLRGGEPAENAQMITALLQGQGKPEHAQAVAMNTALLMKLFGYENIKHNAQQVLDVIQSGKSVNVLSQLTRY</sequence>
<keyword id="KW-0028">Amino-acid biosynthesis</keyword>
<keyword id="KW-0057">Aromatic amino acid biosynthesis</keyword>
<keyword id="KW-0328">Glycosyltransferase</keyword>
<keyword id="KW-0460">Magnesium</keyword>
<keyword id="KW-0479">Metal-binding</keyword>
<keyword id="KW-1185">Reference proteome</keyword>
<keyword id="KW-0808">Transferase</keyword>
<keyword id="KW-0822">Tryptophan biosynthesis</keyword>
<evidence type="ECO:0000255" key="1">
    <source>
        <dbReference type="HAMAP-Rule" id="MF_00211"/>
    </source>
</evidence>
<comment type="function">
    <text evidence="1">Catalyzes the transfer of the phosphoribosyl group of 5-phosphorylribose-1-pyrophosphate (PRPP) to anthranilate to yield N-(5'-phosphoribosyl)-anthranilate (PRA).</text>
</comment>
<comment type="catalytic activity">
    <reaction evidence="1">
        <text>N-(5-phospho-beta-D-ribosyl)anthranilate + diphosphate = 5-phospho-alpha-D-ribose 1-diphosphate + anthranilate</text>
        <dbReference type="Rhea" id="RHEA:11768"/>
        <dbReference type="ChEBI" id="CHEBI:16567"/>
        <dbReference type="ChEBI" id="CHEBI:18277"/>
        <dbReference type="ChEBI" id="CHEBI:33019"/>
        <dbReference type="ChEBI" id="CHEBI:58017"/>
        <dbReference type="EC" id="2.4.2.18"/>
    </reaction>
</comment>
<comment type="cofactor">
    <cofactor evidence="1">
        <name>Mg(2+)</name>
        <dbReference type="ChEBI" id="CHEBI:18420"/>
    </cofactor>
    <text evidence="1">Binds 2 magnesium ions per monomer.</text>
</comment>
<comment type="pathway">
    <text evidence="1">Amino-acid biosynthesis; L-tryptophan biosynthesis; L-tryptophan from chorismate: step 2/5.</text>
</comment>
<comment type="subunit">
    <text evidence="1">Homodimer.</text>
</comment>
<comment type="similarity">
    <text evidence="1">Belongs to the anthranilate phosphoribosyltransferase family.</text>
</comment>
<accession>B8F815</accession>
<gene>
    <name evidence="1" type="primary">trpD</name>
    <name type="ordered locus">HAPS_1995</name>
</gene>
<organism>
    <name type="scientific">Glaesserella parasuis serovar 5 (strain SH0165)</name>
    <name type="common">Haemophilus parasuis</name>
    <dbReference type="NCBI Taxonomy" id="557723"/>
    <lineage>
        <taxon>Bacteria</taxon>
        <taxon>Pseudomonadati</taxon>
        <taxon>Pseudomonadota</taxon>
        <taxon>Gammaproteobacteria</taxon>
        <taxon>Pasteurellales</taxon>
        <taxon>Pasteurellaceae</taxon>
        <taxon>Glaesserella</taxon>
    </lineage>
</organism>
<dbReference type="EC" id="2.4.2.18" evidence="1"/>
<dbReference type="EMBL" id="CP001321">
    <property type="protein sequence ID" value="ACL33467.1"/>
    <property type="molecule type" value="Genomic_DNA"/>
</dbReference>
<dbReference type="RefSeq" id="WP_010786993.1">
    <property type="nucleotide sequence ID" value="NC_011852.1"/>
</dbReference>
<dbReference type="SMR" id="B8F815"/>
<dbReference type="STRING" id="557723.HAPS_1995"/>
<dbReference type="KEGG" id="hap:HAPS_1995"/>
<dbReference type="PATRIC" id="fig|557723.8.peg.1985"/>
<dbReference type="HOGENOM" id="CLU_034315_3_0_6"/>
<dbReference type="UniPathway" id="UPA00035">
    <property type="reaction ID" value="UER00041"/>
</dbReference>
<dbReference type="Proteomes" id="UP000006743">
    <property type="component" value="Chromosome"/>
</dbReference>
<dbReference type="GO" id="GO:0005829">
    <property type="term" value="C:cytosol"/>
    <property type="evidence" value="ECO:0007669"/>
    <property type="project" value="TreeGrafter"/>
</dbReference>
<dbReference type="GO" id="GO:0004048">
    <property type="term" value="F:anthranilate phosphoribosyltransferase activity"/>
    <property type="evidence" value="ECO:0007669"/>
    <property type="project" value="UniProtKB-UniRule"/>
</dbReference>
<dbReference type="GO" id="GO:0000287">
    <property type="term" value="F:magnesium ion binding"/>
    <property type="evidence" value="ECO:0007669"/>
    <property type="project" value="UniProtKB-UniRule"/>
</dbReference>
<dbReference type="GO" id="GO:0000162">
    <property type="term" value="P:L-tryptophan biosynthetic process"/>
    <property type="evidence" value="ECO:0007669"/>
    <property type="project" value="UniProtKB-UniRule"/>
</dbReference>
<dbReference type="FunFam" id="3.40.1030.10:FF:000002">
    <property type="entry name" value="Anthranilate phosphoribosyltransferase"/>
    <property type="match status" value="1"/>
</dbReference>
<dbReference type="Gene3D" id="3.40.1030.10">
    <property type="entry name" value="Nucleoside phosphorylase/phosphoribosyltransferase catalytic domain"/>
    <property type="match status" value="1"/>
</dbReference>
<dbReference type="Gene3D" id="1.20.970.10">
    <property type="entry name" value="Transferase, Pyrimidine Nucleoside Phosphorylase, Chain C"/>
    <property type="match status" value="1"/>
</dbReference>
<dbReference type="HAMAP" id="MF_00211">
    <property type="entry name" value="TrpD"/>
    <property type="match status" value="1"/>
</dbReference>
<dbReference type="InterPro" id="IPR005940">
    <property type="entry name" value="Anthranilate_Pribosyl_Tfrase"/>
</dbReference>
<dbReference type="InterPro" id="IPR000312">
    <property type="entry name" value="Glycosyl_Trfase_fam3"/>
</dbReference>
<dbReference type="InterPro" id="IPR017459">
    <property type="entry name" value="Glycosyl_Trfase_fam3_N_dom"/>
</dbReference>
<dbReference type="InterPro" id="IPR036320">
    <property type="entry name" value="Glycosyl_Trfase_fam3_N_dom_sf"/>
</dbReference>
<dbReference type="InterPro" id="IPR035902">
    <property type="entry name" value="Nuc_phospho_transferase"/>
</dbReference>
<dbReference type="NCBIfam" id="TIGR01245">
    <property type="entry name" value="trpD"/>
    <property type="match status" value="1"/>
</dbReference>
<dbReference type="PANTHER" id="PTHR43285">
    <property type="entry name" value="ANTHRANILATE PHOSPHORIBOSYLTRANSFERASE"/>
    <property type="match status" value="1"/>
</dbReference>
<dbReference type="PANTHER" id="PTHR43285:SF2">
    <property type="entry name" value="ANTHRANILATE PHOSPHORIBOSYLTRANSFERASE"/>
    <property type="match status" value="1"/>
</dbReference>
<dbReference type="Pfam" id="PF02885">
    <property type="entry name" value="Glycos_trans_3N"/>
    <property type="match status" value="1"/>
</dbReference>
<dbReference type="Pfam" id="PF00591">
    <property type="entry name" value="Glycos_transf_3"/>
    <property type="match status" value="1"/>
</dbReference>
<dbReference type="SUPFAM" id="SSF52418">
    <property type="entry name" value="Nucleoside phosphorylase/phosphoribosyltransferase catalytic domain"/>
    <property type="match status" value="1"/>
</dbReference>
<dbReference type="SUPFAM" id="SSF47648">
    <property type="entry name" value="Nucleoside phosphorylase/phosphoribosyltransferase N-terminal domain"/>
    <property type="match status" value="1"/>
</dbReference>